<protein>
    <recommendedName>
        <fullName evidence="1">Cyclic dehypoxanthine futalosine synthase</fullName>
        <shortName evidence="1">Cyclic DHFL synthase</shortName>
        <ecNumber evidence="1">1.21.98.1</ecNumber>
    </recommendedName>
    <alternativeName>
        <fullName evidence="1">Dehypoxanthine futalosine cyclase</fullName>
        <shortName evidence="1">DHFL cyclase</shortName>
    </alternativeName>
    <alternativeName>
        <fullName evidence="1">Menaquinone biosynthetic enzyme MqnC</fullName>
    </alternativeName>
</protein>
<proteinExistence type="inferred from homology"/>
<organism>
    <name type="scientific">Streptomyces coelicolor (strain ATCC BAA-471 / A3(2) / M145)</name>
    <dbReference type="NCBI Taxonomy" id="100226"/>
    <lineage>
        <taxon>Bacteria</taxon>
        <taxon>Bacillati</taxon>
        <taxon>Actinomycetota</taxon>
        <taxon>Actinomycetes</taxon>
        <taxon>Kitasatosporales</taxon>
        <taxon>Streptomycetaceae</taxon>
        <taxon>Streptomyces</taxon>
        <taxon>Streptomyces albidoflavus group</taxon>
    </lineage>
</organism>
<dbReference type="EC" id="1.21.98.1" evidence="1"/>
<dbReference type="EMBL" id="AB447890">
    <property type="protein sequence ID" value="BAG71676.1"/>
    <property type="molecule type" value="Genomic_DNA"/>
</dbReference>
<dbReference type="EMBL" id="AL939120">
    <property type="protein sequence ID" value="CAB44543.1"/>
    <property type="molecule type" value="Genomic_DNA"/>
</dbReference>
<dbReference type="PIR" id="T34636">
    <property type="entry name" value="T34636"/>
</dbReference>
<dbReference type="RefSeq" id="NP_628712.1">
    <property type="nucleotide sequence ID" value="NC_003888.3"/>
</dbReference>
<dbReference type="RefSeq" id="WP_011029726.1">
    <property type="nucleotide sequence ID" value="NZ_VNID01000017.1"/>
</dbReference>
<dbReference type="SMR" id="Q9XAP2"/>
<dbReference type="STRING" id="100226.gene:17762195"/>
<dbReference type="PaxDb" id="100226-SCO4550"/>
<dbReference type="KEGG" id="sco:SCO4550"/>
<dbReference type="PATRIC" id="fig|100226.15.peg.4622"/>
<dbReference type="eggNOG" id="COG1060">
    <property type="taxonomic scope" value="Bacteria"/>
</dbReference>
<dbReference type="HOGENOM" id="CLU_040406_1_0_11"/>
<dbReference type="InParanoid" id="Q9XAP2"/>
<dbReference type="OrthoDB" id="9802027at2"/>
<dbReference type="PhylomeDB" id="Q9XAP2"/>
<dbReference type="BioCyc" id="MetaCyc:MONOMER-14865"/>
<dbReference type="BRENDA" id="1.21.98.1">
    <property type="organism ID" value="5998"/>
</dbReference>
<dbReference type="UniPathway" id="UPA00079"/>
<dbReference type="Proteomes" id="UP000001973">
    <property type="component" value="Chromosome"/>
</dbReference>
<dbReference type="GO" id="GO:0051539">
    <property type="term" value="F:4 iron, 4 sulfur cluster binding"/>
    <property type="evidence" value="ECO:0007669"/>
    <property type="project" value="UniProtKB-KW"/>
</dbReference>
<dbReference type="GO" id="GO:0044689">
    <property type="term" value="F:7,8-didemethyl-8-hydroxy-5-deazariboflavin synthase activity"/>
    <property type="evidence" value="ECO:0000318"/>
    <property type="project" value="GO_Central"/>
</dbReference>
<dbReference type="GO" id="GO:0005506">
    <property type="term" value="F:iron ion binding"/>
    <property type="evidence" value="ECO:0007669"/>
    <property type="project" value="UniProtKB-UniRule"/>
</dbReference>
<dbReference type="GO" id="GO:0046992">
    <property type="term" value="F:oxidoreductase activity, acting on X-H and Y-H to form an X-Y bond"/>
    <property type="evidence" value="ECO:0007669"/>
    <property type="project" value="UniProtKB-UniRule"/>
</dbReference>
<dbReference type="GO" id="GO:0016765">
    <property type="term" value="F:transferase activity, transferring alkyl or aryl (other than methyl) groups"/>
    <property type="evidence" value="ECO:0007669"/>
    <property type="project" value="InterPro"/>
</dbReference>
<dbReference type="GO" id="GO:0009234">
    <property type="term" value="P:menaquinone biosynthetic process"/>
    <property type="evidence" value="ECO:0007669"/>
    <property type="project" value="UniProtKB-UniRule"/>
</dbReference>
<dbReference type="CDD" id="cd01335">
    <property type="entry name" value="Radical_SAM"/>
    <property type="match status" value="1"/>
</dbReference>
<dbReference type="Gene3D" id="3.20.20.70">
    <property type="entry name" value="Aldolase class I"/>
    <property type="match status" value="1"/>
</dbReference>
<dbReference type="HAMAP" id="MF_00992">
    <property type="entry name" value="MqnC"/>
    <property type="match status" value="1"/>
</dbReference>
<dbReference type="InterPro" id="IPR013785">
    <property type="entry name" value="Aldolase_TIM"/>
</dbReference>
<dbReference type="InterPro" id="IPR045567">
    <property type="entry name" value="CofH/MnqC-like_C"/>
</dbReference>
<dbReference type="InterPro" id="IPR022431">
    <property type="entry name" value="Cyclic_DHFL_synthase_mqnC"/>
</dbReference>
<dbReference type="InterPro" id="IPR006638">
    <property type="entry name" value="Elp3/MiaA/NifB-like_rSAM"/>
</dbReference>
<dbReference type="InterPro" id="IPR034405">
    <property type="entry name" value="F420"/>
</dbReference>
<dbReference type="InterPro" id="IPR020050">
    <property type="entry name" value="FO_synthase_su2"/>
</dbReference>
<dbReference type="InterPro" id="IPR007197">
    <property type="entry name" value="rSAM"/>
</dbReference>
<dbReference type="NCBIfam" id="TIGR00423">
    <property type="entry name" value="CofH family radical SAM protein"/>
    <property type="match status" value="1"/>
</dbReference>
<dbReference type="NCBIfam" id="TIGR03699">
    <property type="entry name" value="menaquin_MqnC"/>
    <property type="match status" value="1"/>
</dbReference>
<dbReference type="PANTHER" id="PTHR43076">
    <property type="entry name" value="FO SYNTHASE (COFH)"/>
    <property type="match status" value="1"/>
</dbReference>
<dbReference type="PANTHER" id="PTHR43076:SF1">
    <property type="entry name" value="LIPOYL SYNTHASE 2"/>
    <property type="match status" value="1"/>
</dbReference>
<dbReference type="Pfam" id="PF19288">
    <property type="entry name" value="CofH_C"/>
    <property type="match status" value="1"/>
</dbReference>
<dbReference type="Pfam" id="PF04055">
    <property type="entry name" value="Radical_SAM"/>
    <property type="match status" value="1"/>
</dbReference>
<dbReference type="PIRSF" id="PIRSF004762">
    <property type="entry name" value="CHP00423"/>
    <property type="match status" value="1"/>
</dbReference>
<dbReference type="SFLD" id="SFLDF00343">
    <property type="entry name" value="aminofutalosine_synthase_(mqnE"/>
    <property type="match status" value="1"/>
</dbReference>
<dbReference type="SFLD" id="SFLDF00342">
    <property type="entry name" value="cyclic_dehypoxanthine_futalosi"/>
    <property type="match status" value="1"/>
</dbReference>
<dbReference type="SFLD" id="SFLDG01389">
    <property type="entry name" value="menaquinone_synthsis_involved"/>
    <property type="match status" value="1"/>
</dbReference>
<dbReference type="SFLD" id="SFLDS00029">
    <property type="entry name" value="Radical_SAM"/>
    <property type="match status" value="1"/>
</dbReference>
<dbReference type="SMART" id="SM00729">
    <property type="entry name" value="Elp3"/>
    <property type="match status" value="1"/>
</dbReference>
<dbReference type="SUPFAM" id="SSF102114">
    <property type="entry name" value="Radical SAM enzymes"/>
    <property type="match status" value="1"/>
</dbReference>
<dbReference type="PROSITE" id="PS51918">
    <property type="entry name" value="RADICAL_SAM"/>
    <property type="match status" value="1"/>
</dbReference>
<evidence type="ECO:0000255" key="1">
    <source>
        <dbReference type="HAMAP-Rule" id="MF_00992"/>
    </source>
</evidence>
<evidence type="ECO:0000255" key="2">
    <source>
        <dbReference type="PROSITE-ProRule" id="PRU01266"/>
    </source>
</evidence>
<evidence type="ECO:0000269" key="3">
    <source>
    </source>
</evidence>
<evidence type="ECO:0000305" key="4">
    <source>
    </source>
</evidence>
<feature type="chain" id="PRO_0000425128" description="Cyclic dehypoxanthine futalosine synthase">
    <location>
        <begin position="1"/>
        <end position="399"/>
    </location>
</feature>
<feature type="domain" description="Radical SAM core" evidence="2">
    <location>
        <begin position="56"/>
        <end position="288"/>
    </location>
</feature>
<feature type="binding site" evidence="1">
    <location>
        <position position="70"/>
    </location>
    <ligand>
        <name>[4Fe-4S] cluster</name>
        <dbReference type="ChEBI" id="CHEBI:49883"/>
        <note>4Fe-4S-S-AdoMet</note>
    </ligand>
</feature>
<feature type="binding site" evidence="1">
    <location>
        <position position="74"/>
    </location>
    <ligand>
        <name>[4Fe-4S] cluster</name>
        <dbReference type="ChEBI" id="CHEBI:49883"/>
        <note>4Fe-4S-S-AdoMet</note>
    </ligand>
</feature>
<feature type="binding site" evidence="1">
    <location>
        <position position="77"/>
    </location>
    <ligand>
        <name>[4Fe-4S] cluster</name>
        <dbReference type="ChEBI" id="CHEBI:49883"/>
        <note>4Fe-4S-S-AdoMet</note>
    </ligand>
</feature>
<accession>Q9XAP2</accession>
<accession>B5MG05</accession>
<comment type="function">
    <text evidence="4">Radical SAM enzyme that catalyzes the cyclization of dehypoxanthine futalosine (DHFL) into cyclic dehypoxanthine futalosine (CDHFL), a step in the biosynthesis of menaquinone (MK, vitamin K2).</text>
</comment>
<comment type="catalytic activity">
    <reaction evidence="1">
        <text>dehypoxanthine futalosine + S-adenosyl-L-methionine = cyclic dehypoxanthinylfutalosinate + 5'-deoxyadenosine + L-methionine + H(+)</text>
        <dbReference type="Rhea" id="RHEA:33083"/>
        <dbReference type="ChEBI" id="CHEBI:15378"/>
        <dbReference type="ChEBI" id="CHEBI:17319"/>
        <dbReference type="ChEBI" id="CHEBI:57844"/>
        <dbReference type="ChEBI" id="CHEBI:58864"/>
        <dbReference type="ChEBI" id="CHEBI:59789"/>
        <dbReference type="ChEBI" id="CHEBI:64270"/>
        <dbReference type="EC" id="1.21.98.1"/>
    </reaction>
</comment>
<comment type="cofactor">
    <cofactor evidence="1">
        <name>[4Fe-4S] cluster</name>
        <dbReference type="ChEBI" id="CHEBI:49883"/>
    </cofactor>
    <text evidence="1">Binds 1 [4Fe-4S] cluster. The cluster is coordinated with 3 cysteines and an exchangeable S-adenosyl-L-methionine.</text>
</comment>
<comment type="pathway">
    <text evidence="1 3">Quinol/quinone metabolism; menaquinone biosynthesis.</text>
</comment>
<comment type="disruption phenotype">
    <text evidence="3">Cells lacking this gene require menaquinone-4 (MK 4) for their growth, and accumulate a small amount of DHFL.</text>
</comment>
<comment type="similarity">
    <text evidence="1">Belongs to the radical SAM superfamily. MqnC family.</text>
</comment>
<gene>
    <name evidence="1" type="primary">mqnC</name>
    <name type="ordered locus">SCO4550</name>
</gene>
<reference key="1">
    <citation type="journal article" date="2008" name="Science">
        <title>An alternative menaquinone biosynthetic pathway operating in microorganisms.</title>
        <authorList>
            <person name="Hiratsuka T."/>
            <person name="Furihata K."/>
            <person name="Ishikawa J."/>
            <person name="Yamashita H."/>
            <person name="Itoh N."/>
            <person name="Seto H."/>
            <person name="Dairi T."/>
        </authorList>
    </citation>
    <scope>NUCLEOTIDE SEQUENCE [GENOMIC DNA]</scope>
    <scope>FUNCTION</scope>
    <scope>ROLE IN MENAQUINONE BIOSYNTHESIS</scope>
    <scope>DISRUPTION PHENOTYPE</scope>
    <scope>PATHWAY</scope>
    <source>
        <strain>ATCC BAA-471 / A3(2) / M145</strain>
    </source>
</reference>
<reference key="2">
    <citation type="journal article" date="2002" name="Nature">
        <title>Complete genome sequence of the model actinomycete Streptomyces coelicolor A3(2).</title>
        <authorList>
            <person name="Bentley S.D."/>
            <person name="Chater K.F."/>
            <person name="Cerdeno-Tarraga A.-M."/>
            <person name="Challis G.L."/>
            <person name="Thomson N.R."/>
            <person name="James K.D."/>
            <person name="Harris D.E."/>
            <person name="Quail M.A."/>
            <person name="Kieser H."/>
            <person name="Harper D."/>
            <person name="Bateman A."/>
            <person name="Brown S."/>
            <person name="Chandra G."/>
            <person name="Chen C.W."/>
            <person name="Collins M."/>
            <person name="Cronin A."/>
            <person name="Fraser A."/>
            <person name="Goble A."/>
            <person name="Hidalgo J."/>
            <person name="Hornsby T."/>
            <person name="Howarth S."/>
            <person name="Huang C.-H."/>
            <person name="Kieser T."/>
            <person name="Larke L."/>
            <person name="Murphy L.D."/>
            <person name="Oliver K."/>
            <person name="O'Neil S."/>
            <person name="Rabbinowitsch E."/>
            <person name="Rajandream M.A."/>
            <person name="Rutherford K.M."/>
            <person name="Rutter S."/>
            <person name="Seeger K."/>
            <person name="Saunders D."/>
            <person name="Sharp S."/>
            <person name="Squares R."/>
            <person name="Squares S."/>
            <person name="Taylor K."/>
            <person name="Warren T."/>
            <person name="Wietzorrek A."/>
            <person name="Woodward J.R."/>
            <person name="Barrell B.G."/>
            <person name="Parkhill J."/>
            <person name="Hopwood D.A."/>
        </authorList>
    </citation>
    <scope>NUCLEOTIDE SEQUENCE [LARGE SCALE GENOMIC DNA]</scope>
    <source>
        <strain>ATCC BAA-471 / A3(2) / M145</strain>
    </source>
</reference>
<keyword id="KW-0004">4Fe-4S</keyword>
<keyword id="KW-0408">Iron</keyword>
<keyword id="KW-0411">Iron-sulfur</keyword>
<keyword id="KW-0474">Menaquinone biosynthesis</keyword>
<keyword id="KW-0479">Metal-binding</keyword>
<keyword id="KW-0560">Oxidoreductase</keyword>
<keyword id="KW-1185">Reference proteome</keyword>
<keyword id="KW-0949">S-adenosyl-L-methionine</keyword>
<sequence>MTEKADLQPILDRAAAGGRITPEEALDLYRDAPLHALGAAADAVRRRRYAGTEHIATYIIERNINYTNVCVTACKFCAFYAAPKDTKKGWSRDLDDILRRCAETVELGGTQIMFQGGHHPDYGVEYYEEHFAAIKKEFPQLVIHSLGASEVEHMARISKVSVEEAIRRIHAAGLDSFAGAGAELLPERPRKAIAPLKESGERWLEIMEIAHGLGVESTSTMLMGTGETNAERIEHLRMIRDVQDRTGGFRAFIPYTYQPENNHLKGRTQATLFEYLRMIAIARVFLDNVAHIQGSWLTTGKEVGQLSLHYGADDLGSIMLEENVVSSAGAKHRSNRLEIIDLIRKAGRVPAQRATTYEHLVVHDDPANDPVDERVVSHISSTAIEGGTAHPELKLLAPN</sequence>
<name>MQNC_STRCO</name>